<keyword id="KW-0002">3D-structure</keyword>
<keyword id="KW-0903">Direct protein sequencing</keyword>
<keyword id="KW-0378">Hydrolase</keyword>
<keyword id="KW-0479">Metal-binding</keyword>
<keyword id="KW-0659">Purine metabolism</keyword>
<keyword id="KW-1185">Reference proteome</keyword>
<keyword id="KW-0862">Zinc</keyword>
<dbReference type="EC" id="3.5.2.5"/>
<dbReference type="EMBL" id="U89279">
    <property type="protein sequence ID" value="AAB93853.1"/>
    <property type="molecule type" value="Genomic_DNA"/>
</dbReference>
<dbReference type="EMBL" id="U82664">
    <property type="protein sequence ID" value="AAB40264.1"/>
    <property type="molecule type" value="Genomic_DNA"/>
</dbReference>
<dbReference type="EMBL" id="U00096">
    <property type="protein sequence ID" value="AAC73614.1"/>
    <property type="molecule type" value="Genomic_DNA"/>
</dbReference>
<dbReference type="EMBL" id="AP009048">
    <property type="protein sequence ID" value="BAE76290.1"/>
    <property type="molecule type" value="Genomic_DNA"/>
</dbReference>
<dbReference type="PIR" id="G64782">
    <property type="entry name" value="G64782"/>
</dbReference>
<dbReference type="RefSeq" id="NP_415045.1">
    <property type="nucleotide sequence ID" value="NC_000913.3"/>
</dbReference>
<dbReference type="RefSeq" id="WP_000006900.1">
    <property type="nucleotide sequence ID" value="NZ_SSZK01000024.1"/>
</dbReference>
<dbReference type="PDB" id="3E74">
    <property type="method" value="X-ray"/>
    <property type="resolution" value="2.10 A"/>
    <property type="chains" value="A/B/C/D=1-453"/>
</dbReference>
<dbReference type="PDB" id="8HFD">
    <property type="method" value="X-ray"/>
    <property type="resolution" value="2.07 A"/>
    <property type="chains" value="A/B/C/D=1-453"/>
</dbReference>
<dbReference type="PDBsum" id="3E74"/>
<dbReference type="PDBsum" id="8HFD"/>
<dbReference type="SMR" id="P77671"/>
<dbReference type="BioGRID" id="4259862">
    <property type="interactions" value="19"/>
</dbReference>
<dbReference type="FunCoup" id="P77671">
    <property type="interactions" value="834"/>
</dbReference>
<dbReference type="IntAct" id="P77671">
    <property type="interactions" value="7"/>
</dbReference>
<dbReference type="STRING" id="511145.b0512"/>
<dbReference type="PaxDb" id="511145-b0512"/>
<dbReference type="EnsemblBacteria" id="AAC73614">
    <property type="protein sequence ID" value="AAC73614"/>
    <property type="gene ID" value="b0512"/>
</dbReference>
<dbReference type="GeneID" id="945134"/>
<dbReference type="KEGG" id="ecj:JW0500"/>
<dbReference type="KEGG" id="eco:b0512"/>
<dbReference type="KEGG" id="ecoc:C3026_02510"/>
<dbReference type="PATRIC" id="fig|1411691.4.peg.1766"/>
<dbReference type="EchoBASE" id="EB3384"/>
<dbReference type="eggNOG" id="COG0044">
    <property type="taxonomic scope" value="Bacteria"/>
</dbReference>
<dbReference type="HOGENOM" id="CLU_015572_4_2_6"/>
<dbReference type="InParanoid" id="P77671"/>
<dbReference type="OMA" id="HFNEPGR"/>
<dbReference type="OrthoDB" id="5687299at2"/>
<dbReference type="PhylomeDB" id="P77671"/>
<dbReference type="BioCyc" id="EcoCyc:G6281-MONOMER"/>
<dbReference type="BioCyc" id="MetaCyc:G6281-MONOMER"/>
<dbReference type="BRENDA" id="3.5.2.5">
    <property type="organism ID" value="2026"/>
</dbReference>
<dbReference type="SABIO-RK" id="P77671"/>
<dbReference type="UniPathway" id="UPA00395">
    <property type="reaction ID" value="UER00653"/>
</dbReference>
<dbReference type="EvolutionaryTrace" id="P77671"/>
<dbReference type="PRO" id="PR:P77671"/>
<dbReference type="Proteomes" id="UP000000625">
    <property type="component" value="Chromosome"/>
</dbReference>
<dbReference type="GO" id="GO:0005737">
    <property type="term" value="C:cytoplasm"/>
    <property type="evidence" value="ECO:0000314"/>
    <property type="project" value="EcoliWiki"/>
</dbReference>
<dbReference type="GO" id="GO:0004038">
    <property type="term" value="F:allantoinase activity"/>
    <property type="evidence" value="ECO:0000314"/>
    <property type="project" value="EcoliWiki"/>
</dbReference>
<dbReference type="GO" id="GO:0050897">
    <property type="term" value="F:cobalt ion binding"/>
    <property type="evidence" value="ECO:0007669"/>
    <property type="project" value="InterPro"/>
</dbReference>
<dbReference type="GO" id="GO:0008270">
    <property type="term" value="F:zinc ion binding"/>
    <property type="evidence" value="ECO:0000314"/>
    <property type="project" value="EcoCyc"/>
</dbReference>
<dbReference type="GO" id="GO:0009442">
    <property type="term" value="P:allantoin assimilation pathway"/>
    <property type="evidence" value="ECO:0000314"/>
    <property type="project" value="EcoCyc"/>
</dbReference>
<dbReference type="GO" id="GO:0006145">
    <property type="term" value="P:purine nucleobase catabolic process"/>
    <property type="evidence" value="ECO:0000318"/>
    <property type="project" value="GO_Central"/>
</dbReference>
<dbReference type="CDD" id="cd01315">
    <property type="entry name" value="L-HYD_ALN"/>
    <property type="match status" value="1"/>
</dbReference>
<dbReference type="FunFam" id="3.20.20.140:FF:000013">
    <property type="entry name" value="Allantoinase"/>
    <property type="match status" value="1"/>
</dbReference>
<dbReference type="Gene3D" id="3.20.20.140">
    <property type="entry name" value="Metal-dependent hydrolases"/>
    <property type="match status" value="1"/>
</dbReference>
<dbReference type="Gene3D" id="2.30.40.10">
    <property type="entry name" value="Urease, subunit C, domain 1"/>
    <property type="match status" value="1"/>
</dbReference>
<dbReference type="HAMAP" id="MF_01645">
    <property type="entry name" value="Hydantoinase"/>
    <property type="match status" value="1"/>
</dbReference>
<dbReference type="InterPro" id="IPR017593">
    <property type="entry name" value="Allantoinase"/>
</dbReference>
<dbReference type="InterPro" id="IPR047604">
    <property type="entry name" value="Allantoinase_bact"/>
</dbReference>
<dbReference type="InterPro" id="IPR006680">
    <property type="entry name" value="Amidohydro-rel"/>
</dbReference>
<dbReference type="InterPro" id="IPR050138">
    <property type="entry name" value="DHOase/Allantoinase_Hydrolase"/>
</dbReference>
<dbReference type="InterPro" id="IPR011059">
    <property type="entry name" value="Metal-dep_hydrolase_composite"/>
</dbReference>
<dbReference type="InterPro" id="IPR032466">
    <property type="entry name" value="Metal_Hydrolase"/>
</dbReference>
<dbReference type="NCBIfam" id="TIGR03178">
    <property type="entry name" value="allantoinase"/>
    <property type="match status" value="1"/>
</dbReference>
<dbReference type="NCBIfam" id="NF005960">
    <property type="entry name" value="PRK08044.1"/>
    <property type="match status" value="1"/>
</dbReference>
<dbReference type="PANTHER" id="PTHR43668">
    <property type="entry name" value="ALLANTOINASE"/>
    <property type="match status" value="1"/>
</dbReference>
<dbReference type="PANTHER" id="PTHR43668:SF4">
    <property type="entry name" value="ALLANTOINASE"/>
    <property type="match status" value="1"/>
</dbReference>
<dbReference type="Pfam" id="PF01979">
    <property type="entry name" value="Amidohydro_1"/>
    <property type="match status" value="1"/>
</dbReference>
<dbReference type="SUPFAM" id="SSF51338">
    <property type="entry name" value="Composite domain of metallo-dependent hydrolases"/>
    <property type="match status" value="1"/>
</dbReference>
<dbReference type="SUPFAM" id="SSF51556">
    <property type="entry name" value="Metallo-dependent hydrolases"/>
    <property type="match status" value="1"/>
</dbReference>
<name>ALLB_ECOLI</name>
<proteinExistence type="evidence at protein level"/>
<feature type="chain" id="PRO_0000165942" description="Allantoinase">
    <location>
        <begin position="1"/>
        <end position="453"/>
    </location>
</feature>
<feature type="binding site" evidence="1">
    <location>
        <position position="59"/>
    </location>
    <ligand>
        <name>Zn(2+)</name>
        <dbReference type="ChEBI" id="CHEBI:29105"/>
        <label>1</label>
    </ligand>
</feature>
<feature type="binding site" evidence="1">
    <location>
        <position position="61"/>
    </location>
    <ligand>
        <name>Zn(2+)</name>
        <dbReference type="ChEBI" id="CHEBI:29105"/>
        <label>1</label>
    </ligand>
</feature>
<feature type="binding site" description="via carbamate group" evidence="1">
    <location>
        <position position="146"/>
    </location>
    <ligand>
        <name>Zn(2+)</name>
        <dbReference type="ChEBI" id="CHEBI:29105"/>
        <label>1</label>
    </ligand>
</feature>
<feature type="binding site" description="via carbamate group" evidence="1">
    <location>
        <position position="146"/>
    </location>
    <ligand>
        <name>Zn(2+)</name>
        <dbReference type="ChEBI" id="CHEBI:29105"/>
        <label>2</label>
    </ligand>
</feature>
<feature type="binding site" evidence="1">
    <location>
        <position position="186"/>
    </location>
    <ligand>
        <name>Zn(2+)</name>
        <dbReference type="ChEBI" id="CHEBI:29105"/>
        <label>2</label>
    </ligand>
</feature>
<feature type="binding site" evidence="1">
    <location>
        <position position="242"/>
    </location>
    <ligand>
        <name>Zn(2+)</name>
        <dbReference type="ChEBI" id="CHEBI:29105"/>
        <label>2</label>
    </ligand>
</feature>
<feature type="binding site" evidence="1">
    <location>
        <position position="315"/>
    </location>
    <ligand>
        <name>Zn(2+)</name>
        <dbReference type="ChEBI" id="CHEBI:29105"/>
        <label>1</label>
    </ligand>
</feature>
<feature type="modified residue" description="N6-carboxylysine" evidence="1">
    <location>
        <position position="146"/>
    </location>
</feature>
<feature type="strand" evidence="6">
    <location>
        <begin position="3"/>
        <end position="9"/>
    </location>
</feature>
<feature type="strand" evidence="6">
    <location>
        <begin position="11"/>
        <end position="13"/>
    </location>
</feature>
<feature type="strand" evidence="6">
    <location>
        <begin position="18"/>
        <end position="20"/>
    </location>
</feature>
<feature type="strand" evidence="6">
    <location>
        <begin position="22"/>
        <end position="26"/>
    </location>
</feature>
<feature type="strand" evidence="6">
    <location>
        <begin position="29"/>
        <end position="35"/>
    </location>
</feature>
<feature type="strand" evidence="6">
    <location>
        <begin position="43"/>
        <end position="45"/>
    </location>
</feature>
<feature type="strand" evidence="6">
    <location>
        <begin position="50"/>
        <end position="53"/>
    </location>
</feature>
<feature type="strand" evidence="6">
    <location>
        <begin position="55"/>
        <end position="60"/>
    </location>
</feature>
<feature type="helix" evidence="6">
    <location>
        <begin position="64"/>
        <end position="67"/>
    </location>
</feature>
<feature type="helix" evidence="6">
    <location>
        <begin position="68"/>
        <end position="70"/>
    </location>
</feature>
<feature type="helix" evidence="6">
    <location>
        <begin position="73"/>
        <end position="82"/>
    </location>
</feature>
<feature type="strand" evidence="6">
    <location>
        <begin position="85"/>
        <end position="90"/>
    </location>
</feature>
<feature type="strand" evidence="6">
    <location>
        <begin position="94"/>
        <end position="97"/>
    </location>
</feature>
<feature type="helix" evidence="6">
    <location>
        <begin position="102"/>
        <end position="112"/>
    </location>
</feature>
<feature type="turn" evidence="6">
    <location>
        <begin position="113"/>
        <end position="115"/>
    </location>
</feature>
<feature type="strand" evidence="6">
    <location>
        <begin position="117"/>
        <end position="125"/>
    </location>
</feature>
<feature type="helix" evidence="6">
    <location>
        <begin position="131"/>
        <end position="133"/>
    </location>
</feature>
<feature type="helix" evidence="6">
    <location>
        <begin position="135"/>
        <end position="140"/>
    </location>
</feature>
<feature type="strand" evidence="6">
    <location>
        <begin position="143"/>
        <end position="149"/>
    </location>
</feature>
<feature type="helix" evidence="6">
    <location>
        <begin position="166"/>
        <end position="179"/>
    </location>
</feature>
<feature type="strand" evidence="6">
    <location>
        <begin position="183"/>
        <end position="186"/>
    </location>
</feature>
<feature type="helix" evidence="6">
    <location>
        <begin position="190"/>
        <end position="202"/>
    </location>
</feature>
<feature type="helix" evidence="6">
    <location>
        <begin position="208"/>
        <end position="213"/>
    </location>
</feature>
<feature type="helix" evidence="6">
    <location>
        <begin position="217"/>
        <end position="234"/>
    </location>
</feature>
<feature type="strand" evidence="6">
    <location>
        <begin position="238"/>
        <end position="240"/>
    </location>
</feature>
<feature type="helix" evidence="6">
    <location>
        <begin position="246"/>
        <end position="257"/>
    </location>
</feature>
<feature type="strand" evidence="6">
    <location>
        <begin position="262"/>
        <end position="266"/>
    </location>
</feature>
<feature type="helix" evidence="6">
    <location>
        <begin position="269"/>
        <end position="272"/>
    </location>
</feature>
<feature type="helix" evidence="6">
    <location>
        <begin position="275"/>
        <end position="281"/>
    </location>
</feature>
<feature type="helix" evidence="6">
    <location>
        <begin position="283"/>
        <end position="285"/>
    </location>
</feature>
<feature type="helix" evidence="6">
    <location>
        <begin position="294"/>
        <end position="305"/>
    </location>
</feature>
<feature type="helix" evidence="6">
    <location>
        <begin position="321"/>
        <end position="324"/>
    </location>
</feature>
<feature type="turn" evidence="6">
    <location>
        <begin position="328"/>
        <end position="330"/>
    </location>
</feature>
<feature type="helix" evidence="6">
    <location>
        <begin position="338"/>
        <end position="340"/>
    </location>
</feature>
<feature type="helix" evidence="6">
    <location>
        <begin position="342"/>
        <end position="349"/>
    </location>
</feature>
<feature type="turn" evidence="6">
    <location>
        <begin position="350"/>
        <end position="353"/>
    </location>
</feature>
<feature type="helix" evidence="6">
    <location>
        <begin position="357"/>
        <end position="364"/>
    </location>
</feature>
<feature type="helix" evidence="6">
    <location>
        <begin position="366"/>
        <end position="371"/>
    </location>
</feature>
<feature type="strand" evidence="6">
    <location>
        <begin position="377"/>
        <end position="379"/>
    </location>
</feature>
<feature type="strand" evidence="6">
    <location>
        <begin position="388"/>
        <end position="394"/>
    </location>
</feature>
<feature type="helix" evidence="6">
    <location>
        <begin position="401"/>
        <end position="403"/>
    </location>
</feature>
<feature type="strand" evidence="6">
    <location>
        <begin position="406"/>
        <end position="408"/>
    </location>
</feature>
<feature type="turn" evidence="6">
    <location>
        <begin position="412"/>
        <end position="415"/>
    </location>
</feature>
<feature type="strand" evidence="6">
    <location>
        <begin position="417"/>
        <end position="419"/>
    </location>
</feature>
<feature type="strand" evidence="6">
    <location>
        <begin position="421"/>
        <end position="427"/>
    </location>
</feature>
<feature type="strand" evidence="6">
    <location>
        <begin position="430"/>
        <end position="434"/>
    </location>
</feature>
<feature type="turn" evidence="6">
    <location>
        <begin position="435"/>
        <end position="437"/>
    </location>
</feature>
<feature type="helix" evidence="6">
    <location>
        <begin position="450"/>
        <end position="452"/>
    </location>
</feature>
<reference key="1">
    <citation type="journal article" date="1999" name="J. Bacteriol.">
        <title>Genetic analysis of a chromosomal region containing genes required for assimilation of allantoin nitrogen and linked glyoxylate metabolism in Escherichia coli.</title>
        <authorList>
            <person name="Cusa E."/>
            <person name="Obradors N."/>
            <person name="Baldoma L."/>
            <person name="Badia J."/>
            <person name="Aguilar J."/>
        </authorList>
    </citation>
    <scope>NUCLEOTIDE SEQUENCE [GENOMIC DNA]</scope>
    <scope>FUNCTION</scope>
    <source>
        <strain>K12 / ECL1</strain>
    </source>
</reference>
<reference key="2">
    <citation type="submission" date="1997-01" db="EMBL/GenBank/DDBJ databases">
        <title>Sequence of minutes 4-25 of Escherichia coli.</title>
        <authorList>
            <person name="Chung E."/>
            <person name="Allen E."/>
            <person name="Araujo R."/>
            <person name="Aparicio A.M."/>
            <person name="Davis K."/>
            <person name="Duncan M."/>
            <person name="Federspiel N."/>
            <person name="Hyman R."/>
            <person name="Kalman S."/>
            <person name="Komp C."/>
            <person name="Kurdi O."/>
            <person name="Lew H."/>
            <person name="Lin D."/>
            <person name="Namath A."/>
            <person name="Oefner P."/>
            <person name="Roberts D."/>
            <person name="Schramm S."/>
            <person name="Davis R.W."/>
        </authorList>
    </citation>
    <scope>NUCLEOTIDE SEQUENCE [LARGE SCALE GENOMIC DNA]</scope>
    <source>
        <strain>K12 / MG1655 / ATCC 47076</strain>
    </source>
</reference>
<reference key="3">
    <citation type="journal article" date="1997" name="Science">
        <title>The complete genome sequence of Escherichia coli K-12.</title>
        <authorList>
            <person name="Blattner F.R."/>
            <person name="Plunkett G. III"/>
            <person name="Bloch C.A."/>
            <person name="Perna N.T."/>
            <person name="Burland V."/>
            <person name="Riley M."/>
            <person name="Collado-Vides J."/>
            <person name="Glasner J.D."/>
            <person name="Rode C.K."/>
            <person name="Mayhew G.F."/>
            <person name="Gregor J."/>
            <person name="Davis N.W."/>
            <person name="Kirkpatrick H.A."/>
            <person name="Goeden M.A."/>
            <person name="Rose D.J."/>
            <person name="Mau B."/>
            <person name="Shao Y."/>
        </authorList>
    </citation>
    <scope>NUCLEOTIDE SEQUENCE [LARGE SCALE GENOMIC DNA]</scope>
    <source>
        <strain>K12 / MG1655 / ATCC 47076</strain>
    </source>
</reference>
<reference key="4">
    <citation type="journal article" date="2006" name="Mol. Syst. Biol.">
        <title>Highly accurate genome sequences of Escherichia coli K-12 strains MG1655 and W3110.</title>
        <authorList>
            <person name="Hayashi K."/>
            <person name="Morooka N."/>
            <person name="Yamamoto Y."/>
            <person name="Fujita K."/>
            <person name="Isono K."/>
            <person name="Choi S."/>
            <person name="Ohtsubo E."/>
            <person name="Baba T."/>
            <person name="Wanner B.L."/>
            <person name="Mori H."/>
            <person name="Horiuchi T."/>
        </authorList>
    </citation>
    <scope>NUCLEOTIDE SEQUENCE [LARGE SCALE GENOMIC DNA]</scope>
    <source>
        <strain>K12 / W3110 / ATCC 27325 / DSM 5911</strain>
    </source>
</reference>
<reference key="5">
    <citation type="journal article" date="2000" name="J. Bacteriol.">
        <title>Functional expression and characterization of the two cyclic amidohydrolase enzymes, allantoinase and a novel phenylhydantoinase, from Escherichia coli.</title>
        <authorList>
            <person name="Kim G.J."/>
            <person name="Lee D.E."/>
            <person name="Kim H.-S."/>
        </authorList>
    </citation>
    <scope>PROTEIN SEQUENCE OF N-TERMINUS</scope>
    <scope>CATALYTIC ACTIVITY</scope>
    <scope>BIOPHYSICOCHEMICAL PROPERTIES</scope>
    <scope>COFACTOR</scope>
    <scope>ACTIVITY REGULATION</scope>
    <scope>FUNCTION</scope>
    <scope>SUBUNIT</scope>
    <source>
        <strain>K12</strain>
    </source>
</reference>
<reference key="6">
    <citation type="journal article" date="2003" name="J. Bacteriol.">
        <title>Metal ion dependence of recombinant Escherichia coli allantoinase.</title>
        <authorList>
            <person name="Mulrooney S.B."/>
            <person name="Hausinger R.P."/>
        </authorList>
    </citation>
    <scope>BIOPHYSICOCHEMICAL PROPERTIES</scope>
    <scope>ACTIVITY REGULATION</scope>
    <scope>STEREOSPECIFICITY</scope>
    <scope>COFACTOR</scope>
    <source>
        <strain>K12 / W3110 / ATCC 27325 / DSM 5911</strain>
    </source>
</reference>
<gene>
    <name type="primary">allB</name>
    <name type="synonym">glxB3</name>
    <name type="synonym">ybbX</name>
    <name type="ordered locus">b0512</name>
    <name type="ordered locus">JW0500</name>
</gene>
<accession>P77671</accession>
<accession>Q2MBR6</accession>
<evidence type="ECO:0000250" key="1"/>
<evidence type="ECO:0000269" key="2">
    <source>
    </source>
</evidence>
<evidence type="ECO:0000269" key="3">
    <source>
    </source>
</evidence>
<evidence type="ECO:0000269" key="4">
    <source>
    </source>
</evidence>
<evidence type="ECO:0000305" key="5"/>
<evidence type="ECO:0007829" key="6">
    <source>
        <dbReference type="PDB" id="8HFD"/>
    </source>
</evidence>
<comment type="function">
    <text evidence="2 3">Catalyzes the conversion of allantoin (5-ureidohydantoin) to allantoic acid by hydrolytic cleavage of the five-member hydantoin ring.</text>
</comment>
<comment type="catalytic activity">
    <reaction evidence="3">
        <text>(S)-allantoin + H2O = allantoate + H(+)</text>
        <dbReference type="Rhea" id="RHEA:17029"/>
        <dbReference type="ChEBI" id="CHEBI:15377"/>
        <dbReference type="ChEBI" id="CHEBI:15378"/>
        <dbReference type="ChEBI" id="CHEBI:15678"/>
        <dbReference type="ChEBI" id="CHEBI:17536"/>
        <dbReference type="EC" id="3.5.2.5"/>
    </reaction>
</comment>
<comment type="cofactor">
    <cofactor evidence="3 4 5">
        <name>Zn(2+)</name>
        <dbReference type="ChEBI" id="CHEBI:29105"/>
    </cofactor>
    <cofactor evidence="3 4 5">
        <name>Ni(2+)</name>
        <dbReference type="ChEBI" id="CHEBI:49786"/>
    </cofactor>
    <cofactor evidence="3 4 5">
        <name>Co(2+)</name>
        <dbReference type="ChEBI" id="CHEBI:48828"/>
    </cofactor>
    <cofactor evidence="3 4 5">
        <name>Mn(2+)</name>
        <dbReference type="ChEBI" id="CHEBI:29035"/>
    </cofactor>
    <text evidence="3 4 5">Binds 2 Zn(2+) ions per subunit. Can also use Ni(2+), Co(2+) or Mn(2+).</text>
</comment>
<comment type="activity regulation">
    <text evidence="3 4">Severely inhibited by copper, and competitively inhibited by dithiothreitol (DTT). Zinc concentrations above 2.5 mM and cobalt or nickel concentrations above 1 mM are inhibitors.</text>
</comment>
<comment type="biophysicochemical properties">
    <kinetics>
        <KM evidence="3 4">4.2 mM for allantoin (at 40 degrees Celsius and pH 8.0)</KM>
        <KM evidence="3 4">17 mM for allantoin (in zinc-supplemented medium at 37 degrees Celsius and pH 7.4)</KM>
        <KM evidence="3 4">19.5 mM for allantoin (in cobalt-supplemented medium at 37 degrees Celsius and pH 7.4)</KM>
        <KM evidence="3 4">80 mM for allantoin (in nickel-supplemented medium at 37 degrees Celsius and pH 7.4)</KM>
        <Vmax evidence="3 4">101.0 umol/min/mg enzyme (in zinc-supplemented medium at 37 degrees Celsius and pH 7.4)</Vmax>
        <Vmax evidence="3 4">8.1 umol/min/mg enzyme (in cobalt-supplemented medium (20mM) at 37 degrees Celsius and pH 7.4)</Vmax>
        <Vmax evidence="3 4">6.7 umol/min/mg enzyme (at 40 degrees Celsius and pH 8.0)</Vmax>
        <Vmax evidence="3 4">3.9 umol/min/mg enzyme (in cobalt-supplemented medium (2mM) at 37 degrees Celsius and pH 7.4)</Vmax>
        <Vmax evidence="3 4">0.7 umol/min/mg enzyme (without added metal at 37 degrees Celsius and pH 7.4)</Vmax>
    </kinetics>
    <phDependence>
        <text evidence="3 4">Optimum pH is 7.5-8.0. The optimal activity is at pH 8.8 for zinc-containing form and pH 9.0 for cobalt-containing form.</text>
    </phDependence>
    <temperatureDependence>
        <text evidence="3 4">Optimum temperature is 40-45 degrees Celsius.</text>
    </temperatureDependence>
</comment>
<comment type="pathway">
    <text>Nitrogen metabolism; (S)-allantoin degradation; allantoate from (S)-allantoin: step 1/1.</text>
</comment>
<comment type="subunit">
    <text evidence="3">Homotetramer.</text>
</comment>
<comment type="induction">
    <text>By glyoxylate.</text>
</comment>
<comment type="PTM">
    <text evidence="1">Carboxylation allows a single lysine to coordinate two zinc ions.</text>
</comment>
<comment type="miscellaneous">
    <text>The zinc-containing form utilizes only the (S)-isomer of allantoin, whereas the cobalt-containing form prefers the (S)-isomer, but also hydrolyzes the (R)-isomer at about 1/10 the rate.</text>
</comment>
<comment type="similarity">
    <text evidence="5">Belongs to the metallo-dependent hydrolases superfamily. Allantoinase family.</text>
</comment>
<protein>
    <recommendedName>
        <fullName>Allantoinase</fullName>
        <ecNumber>3.5.2.5</ecNumber>
    </recommendedName>
    <alternativeName>
        <fullName>Allantoin-utilizing enzyme</fullName>
    </alternativeName>
</protein>
<sequence length="453" mass="49602">MSFDLIIKNGTVILENEARVVDIAVKGGKIAAIGQDLGDAKEVMDASGLVVSPGMVDAHTHISEPGRSHWEGYETGTRAAAKGGITTMIEMPLNQLPATVDRASIELKFDAAKGKLTIDAAQLGGLVSYNIDRLHELDEVGVVGFKCFVATCGDRGIDNDFRDVNDWQFFKGAQKLGELGQPVLVHCENALICDELGEEAKREGRVTAHDYVASRPVFTEVEAIRRVLYLAKVAGCRLHVCHVSSPEGVEEVTRARQEGQDVTCESCPHYFVLDTDQFEEIGTLAKCSPPIRDLENQKGMWEKLFNGEIDCLVSDHSPCPPEMKAGNIMKAWGGIAGLQSCMDVMFDEAVQKRGMSLPMFGKLMATNAADIFGLQQKGRIAPGKDADFVFIQPNSSYVLTNDDLEYRHKVSPYVGRTIGARITKTILRGDVIYDIEQGFPVAPKGQFILKHQQ</sequence>
<organism>
    <name type="scientific">Escherichia coli (strain K12)</name>
    <dbReference type="NCBI Taxonomy" id="83333"/>
    <lineage>
        <taxon>Bacteria</taxon>
        <taxon>Pseudomonadati</taxon>
        <taxon>Pseudomonadota</taxon>
        <taxon>Gammaproteobacteria</taxon>
        <taxon>Enterobacterales</taxon>
        <taxon>Enterobacteriaceae</taxon>
        <taxon>Escherichia</taxon>
    </lineage>
</organism>